<reference key="1">
    <citation type="submission" date="2009-06" db="EMBL/GenBank/DDBJ databases">
        <title>Complete sequence of Thermotogales bacterium TBF 19.5.1.</title>
        <authorList>
            <consortium name="US DOE Joint Genome Institute"/>
            <person name="Lucas S."/>
            <person name="Copeland A."/>
            <person name="Lapidus A."/>
            <person name="Glavina del Rio T."/>
            <person name="Tice H."/>
            <person name="Bruce D."/>
            <person name="Goodwin L."/>
            <person name="Pitluck S."/>
            <person name="Chertkov O."/>
            <person name="Brettin T."/>
            <person name="Detter J.C."/>
            <person name="Han C."/>
            <person name="Schmutz J."/>
            <person name="Larimer F."/>
            <person name="Land M."/>
            <person name="Hauser L."/>
            <person name="Kyrpides N."/>
            <person name="Ovchinnikova G."/>
            <person name="Noll K."/>
        </authorList>
    </citation>
    <scope>NUCLEOTIDE SEQUENCE [LARGE SCALE GENOMIC DNA]</scope>
    <source>
        <strain>ATCC BAA-1733 / DSM 21960 / TBF 19.5.1</strain>
    </source>
</reference>
<protein>
    <recommendedName>
        <fullName evidence="1">L-lactate dehydrogenase</fullName>
        <shortName evidence="1">L-LDH</shortName>
        <ecNumber evidence="1">1.1.1.27</ecNumber>
    </recommendedName>
</protein>
<name>LDH_KOSOT</name>
<proteinExistence type="inferred from homology"/>
<dbReference type="EC" id="1.1.1.27" evidence="1"/>
<dbReference type="EMBL" id="CP001634">
    <property type="protein sequence ID" value="ACR79621.1"/>
    <property type="molecule type" value="Genomic_DNA"/>
</dbReference>
<dbReference type="RefSeq" id="WP_015868283.1">
    <property type="nucleotide sequence ID" value="NC_012785.1"/>
</dbReference>
<dbReference type="SMR" id="C5CGP2"/>
<dbReference type="STRING" id="521045.Kole_0912"/>
<dbReference type="KEGG" id="kol:Kole_0912"/>
<dbReference type="eggNOG" id="COG0039">
    <property type="taxonomic scope" value="Bacteria"/>
</dbReference>
<dbReference type="HOGENOM" id="CLU_045401_1_1_0"/>
<dbReference type="OrthoDB" id="9802969at2"/>
<dbReference type="UniPathway" id="UPA00554">
    <property type="reaction ID" value="UER00611"/>
</dbReference>
<dbReference type="Proteomes" id="UP000002382">
    <property type="component" value="Chromosome"/>
</dbReference>
<dbReference type="GO" id="GO:0005737">
    <property type="term" value="C:cytoplasm"/>
    <property type="evidence" value="ECO:0007669"/>
    <property type="project" value="UniProtKB-SubCell"/>
</dbReference>
<dbReference type="GO" id="GO:0004459">
    <property type="term" value="F:L-lactate dehydrogenase activity"/>
    <property type="evidence" value="ECO:0007669"/>
    <property type="project" value="UniProtKB-UniRule"/>
</dbReference>
<dbReference type="GO" id="GO:0006096">
    <property type="term" value="P:glycolytic process"/>
    <property type="evidence" value="ECO:0007669"/>
    <property type="project" value="UniProtKB-UniRule"/>
</dbReference>
<dbReference type="GO" id="GO:0006089">
    <property type="term" value="P:lactate metabolic process"/>
    <property type="evidence" value="ECO:0007669"/>
    <property type="project" value="TreeGrafter"/>
</dbReference>
<dbReference type="CDD" id="cd05292">
    <property type="entry name" value="LDH_2"/>
    <property type="match status" value="1"/>
</dbReference>
<dbReference type="FunFam" id="3.40.50.720:FF:000018">
    <property type="entry name" value="Malate dehydrogenase"/>
    <property type="match status" value="1"/>
</dbReference>
<dbReference type="Gene3D" id="3.90.110.10">
    <property type="entry name" value="Lactate dehydrogenase/glycoside hydrolase, family 4, C-terminal"/>
    <property type="match status" value="1"/>
</dbReference>
<dbReference type="Gene3D" id="3.40.50.720">
    <property type="entry name" value="NAD(P)-binding Rossmann-like Domain"/>
    <property type="match status" value="1"/>
</dbReference>
<dbReference type="HAMAP" id="MF_00488">
    <property type="entry name" value="Lactate_dehydrog"/>
    <property type="match status" value="1"/>
</dbReference>
<dbReference type="InterPro" id="IPR001557">
    <property type="entry name" value="L-lactate/malate_DH"/>
</dbReference>
<dbReference type="InterPro" id="IPR011304">
    <property type="entry name" value="L-lactate_DH"/>
</dbReference>
<dbReference type="InterPro" id="IPR018177">
    <property type="entry name" value="L-lactate_DH_AS"/>
</dbReference>
<dbReference type="InterPro" id="IPR022383">
    <property type="entry name" value="Lactate/malate_DH_C"/>
</dbReference>
<dbReference type="InterPro" id="IPR001236">
    <property type="entry name" value="Lactate/malate_DH_N"/>
</dbReference>
<dbReference type="InterPro" id="IPR015955">
    <property type="entry name" value="Lactate_DH/Glyco_Ohase_4_C"/>
</dbReference>
<dbReference type="InterPro" id="IPR036291">
    <property type="entry name" value="NAD(P)-bd_dom_sf"/>
</dbReference>
<dbReference type="NCBIfam" id="TIGR01771">
    <property type="entry name" value="L-LDH-NAD"/>
    <property type="match status" value="1"/>
</dbReference>
<dbReference type="NCBIfam" id="NF000824">
    <property type="entry name" value="PRK00066.1"/>
    <property type="match status" value="1"/>
</dbReference>
<dbReference type="NCBIfam" id="NF004863">
    <property type="entry name" value="PRK06223.1"/>
    <property type="match status" value="1"/>
</dbReference>
<dbReference type="PANTHER" id="PTHR43128">
    <property type="entry name" value="L-2-HYDROXYCARBOXYLATE DEHYDROGENASE (NAD(P)(+))"/>
    <property type="match status" value="1"/>
</dbReference>
<dbReference type="PANTHER" id="PTHR43128:SF16">
    <property type="entry name" value="L-LACTATE DEHYDROGENASE"/>
    <property type="match status" value="1"/>
</dbReference>
<dbReference type="Pfam" id="PF02866">
    <property type="entry name" value="Ldh_1_C"/>
    <property type="match status" value="1"/>
</dbReference>
<dbReference type="Pfam" id="PF00056">
    <property type="entry name" value="Ldh_1_N"/>
    <property type="match status" value="1"/>
</dbReference>
<dbReference type="PIRSF" id="PIRSF000102">
    <property type="entry name" value="Lac_mal_DH"/>
    <property type="match status" value="1"/>
</dbReference>
<dbReference type="PRINTS" id="PR00086">
    <property type="entry name" value="LLDHDRGNASE"/>
</dbReference>
<dbReference type="SUPFAM" id="SSF56327">
    <property type="entry name" value="LDH C-terminal domain-like"/>
    <property type="match status" value="1"/>
</dbReference>
<dbReference type="SUPFAM" id="SSF51735">
    <property type="entry name" value="NAD(P)-binding Rossmann-fold domains"/>
    <property type="match status" value="1"/>
</dbReference>
<dbReference type="PROSITE" id="PS00064">
    <property type="entry name" value="L_LDH"/>
    <property type="match status" value="1"/>
</dbReference>
<gene>
    <name evidence="1" type="primary">ldh</name>
    <name type="ordered locus">Kole_0912</name>
</gene>
<sequence>MKVSIIGAGMVGSSIAYATMIKGVAREISIVDINGDLAEGQALDLSHGAPYVHPVRIKGGNDYSLTKNSDVVVITAGRAQKPGETRLQLLKSNAKIISSIVESCLKYSENPIILMVSNPVDVLTWVAWKKSGLPRERIIGSGTTLDTARLRQNIADHCKLDPRSVHAYIIGEHGDSEIASWSTANVGGVPIKEFCNGCLAKGCERDKVFERIFENTRDAAYKIIEKKGATYYGIGLAVARILETIAGDHHSVLTVSSVHEEFRGMRDVPFSVPSVLGKKGIERILPLKLSDDELKGLENSAKVIKAAIESILENREPRAENPR</sequence>
<evidence type="ECO:0000255" key="1">
    <source>
        <dbReference type="HAMAP-Rule" id="MF_00488"/>
    </source>
</evidence>
<keyword id="KW-0021">Allosteric enzyme</keyword>
<keyword id="KW-0963">Cytoplasm</keyword>
<keyword id="KW-0520">NAD</keyword>
<keyword id="KW-0560">Oxidoreductase</keyword>
<keyword id="KW-0597">Phosphoprotein</keyword>
<keyword id="KW-1185">Reference proteome</keyword>
<accession>C5CGP2</accession>
<feature type="chain" id="PRO_1000206450" description="L-lactate dehydrogenase">
    <location>
        <begin position="1"/>
        <end position="323"/>
    </location>
</feature>
<feature type="active site" description="Proton acceptor" evidence="1">
    <location>
        <position position="173"/>
    </location>
</feature>
<feature type="binding site" evidence="1">
    <location>
        <position position="11"/>
    </location>
    <ligand>
        <name>NAD(+)</name>
        <dbReference type="ChEBI" id="CHEBI:57540"/>
    </ligand>
</feature>
<feature type="binding site" evidence="1">
    <location>
        <position position="32"/>
    </location>
    <ligand>
        <name>NAD(+)</name>
        <dbReference type="ChEBI" id="CHEBI:57540"/>
    </ligand>
</feature>
<feature type="binding site" evidence="1">
    <location>
        <position position="63"/>
    </location>
    <ligand>
        <name>NAD(+)</name>
        <dbReference type="ChEBI" id="CHEBI:57540"/>
    </ligand>
</feature>
<feature type="binding site" evidence="1">
    <location>
        <position position="80"/>
    </location>
    <ligand>
        <name>substrate</name>
    </ligand>
</feature>
<feature type="binding site" evidence="1">
    <location>
        <position position="86"/>
    </location>
    <ligand>
        <name>substrate</name>
    </ligand>
</feature>
<feature type="binding site" evidence="1">
    <location>
        <position position="99"/>
    </location>
    <ligand>
        <name>NAD(+)</name>
        <dbReference type="ChEBI" id="CHEBI:57540"/>
    </ligand>
</feature>
<feature type="binding site" evidence="1">
    <location>
        <begin position="116"/>
        <end position="118"/>
    </location>
    <ligand>
        <name>NAD(+)</name>
        <dbReference type="ChEBI" id="CHEBI:57540"/>
    </ligand>
</feature>
<feature type="binding site" evidence="1">
    <location>
        <begin position="118"/>
        <end position="121"/>
    </location>
    <ligand>
        <name>substrate</name>
    </ligand>
</feature>
<feature type="binding site" evidence="1">
    <location>
        <position position="141"/>
    </location>
    <ligand>
        <name>NAD(+)</name>
        <dbReference type="ChEBI" id="CHEBI:57540"/>
    </ligand>
</feature>
<feature type="binding site" evidence="1">
    <location>
        <begin position="146"/>
        <end position="149"/>
    </location>
    <ligand>
        <name>substrate</name>
    </ligand>
</feature>
<feature type="binding site" evidence="1">
    <location>
        <position position="151"/>
    </location>
    <ligand>
        <name>beta-D-fructose 1,6-bisphosphate</name>
        <dbReference type="ChEBI" id="CHEBI:32966"/>
        <note>allosteric activator</note>
    </ligand>
</feature>
<feature type="binding site" evidence="1">
    <location>
        <position position="166"/>
    </location>
    <ligand>
        <name>beta-D-fructose 1,6-bisphosphate</name>
        <dbReference type="ChEBI" id="CHEBI:32966"/>
        <note>allosteric activator</note>
    </ligand>
</feature>
<feature type="binding site" evidence="1">
    <location>
        <position position="230"/>
    </location>
    <ligand>
        <name>substrate</name>
    </ligand>
</feature>
<feature type="modified residue" description="Phosphotyrosine" evidence="1">
    <location>
        <position position="221"/>
    </location>
</feature>
<comment type="function">
    <text evidence="1">Catalyzes the conversion of lactate to pyruvate.</text>
</comment>
<comment type="catalytic activity">
    <reaction evidence="1">
        <text>(S)-lactate + NAD(+) = pyruvate + NADH + H(+)</text>
        <dbReference type="Rhea" id="RHEA:23444"/>
        <dbReference type="ChEBI" id="CHEBI:15361"/>
        <dbReference type="ChEBI" id="CHEBI:15378"/>
        <dbReference type="ChEBI" id="CHEBI:16651"/>
        <dbReference type="ChEBI" id="CHEBI:57540"/>
        <dbReference type="ChEBI" id="CHEBI:57945"/>
        <dbReference type="EC" id="1.1.1.27"/>
    </reaction>
</comment>
<comment type="activity regulation">
    <text evidence="1">Allosterically activated by fructose 1,6-bisphosphate (FBP).</text>
</comment>
<comment type="pathway">
    <text evidence="1">Fermentation; pyruvate fermentation to lactate; (S)-lactate from pyruvate: step 1/1.</text>
</comment>
<comment type="subunit">
    <text evidence="1">Homotetramer.</text>
</comment>
<comment type="subcellular location">
    <subcellularLocation>
        <location evidence="1">Cytoplasm</location>
    </subcellularLocation>
</comment>
<comment type="similarity">
    <text evidence="1">Belongs to the LDH/MDH superfamily. LDH family.</text>
</comment>
<organism>
    <name type="scientific">Kosmotoga olearia (strain ATCC BAA-1733 / DSM 21960 / TBF 19.5.1)</name>
    <dbReference type="NCBI Taxonomy" id="521045"/>
    <lineage>
        <taxon>Bacteria</taxon>
        <taxon>Thermotogati</taxon>
        <taxon>Thermotogota</taxon>
        <taxon>Thermotogae</taxon>
        <taxon>Kosmotogales</taxon>
        <taxon>Kosmotogaceae</taxon>
        <taxon>Kosmotoga</taxon>
    </lineage>
</organism>